<feature type="chain" id="PRO_1000116727" description="Elongation factor Ts">
    <location>
        <begin position="1"/>
        <end position="198"/>
    </location>
</feature>
<feature type="region of interest" description="Involved in Mg(2+) ion dislocation from EF-Tu" evidence="1">
    <location>
        <begin position="81"/>
        <end position="84"/>
    </location>
</feature>
<sequence>MEITIEMIKELRERTGAGVMEAKKALEEANGDMEKAVTILREKGVIKAAKKAGRVAKEGIIEAYIHTGDKLGVLVEINCETDFVARTDEFRKLAKDIALQIAGMNPQYVSKEDVPPEVIEKEKEIYRTQLRNEGKPEHVIEKIIEGKLEKFYEEVCLLEQPFVRNPEIKVKDLITEAISKLGENIVVRRFARFVVGEE</sequence>
<dbReference type="EMBL" id="CP001251">
    <property type="protein sequence ID" value="ACK42481.1"/>
    <property type="molecule type" value="Genomic_DNA"/>
</dbReference>
<dbReference type="RefSeq" id="WP_012583563.1">
    <property type="nucleotide sequence ID" value="NC_011661.1"/>
</dbReference>
<dbReference type="RefSeq" id="YP_002353095.1">
    <property type="nucleotide sequence ID" value="NC_011661.1"/>
</dbReference>
<dbReference type="SMR" id="B8E2Y1"/>
<dbReference type="FunCoup" id="B8E2Y1">
    <property type="interactions" value="383"/>
</dbReference>
<dbReference type="STRING" id="515635.Dtur_1202"/>
<dbReference type="EnsemblBacteria" id="ACK42481">
    <property type="protein sequence ID" value="ACK42481"/>
    <property type="gene ID" value="Dtur_1202"/>
</dbReference>
<dbReference type="KEGG" id="dtu:Dtur_1202"/>
<dbReference type="PATRIC" id="fig|515635.4.peg.1240"/>
<dbReference type="eggNOG" id="COG0264">
    <property type="taxonomic scope" value="Bacteria"/>
</dbReference>
<dbReference type="HOGENOM" id="CLU_047155_1_1_0"/>
<dbReference type="InParanoid" id="B8E2Y1"/>
<dbReference type="OrthoDB" id="9808348at2"/>
<dbReference type="Proteomes" id="UP000007719">
    <property type="component" value="Chromosome"/>
</dbReference>
<dbReference type="GO" id="GO:0005737">
    <property type="term" value="C:cytoplasm"/>
    <property type="evidence" value="ECO:0007669"/>
    <property type="project" value="UniProtKB-SubCell"/>
</dbReference>
<dbReference type="GO" id="GO:0003746">
    <property type="term" value="F:translation elongation factor activity"/>
    <property type="evidence" value="ECO:0000318"/>
    <property type="project" value="GO_Central"/>
</dbReference>
<dbReference type="GO" id="GO:0006414">
    <property type="term" value="P:translational elongation"/>
    <property type="evidence" value="ECO:0000318"/>
    <property type="project" value="GO_Central"/>
</dbReference>
<dbReference type="CDD" id="cd14275">
    <property type="entry name" value="UBA_EF-Ts"/>
    <property type="match status" value="1"/>
</dbReference>
<dbReference type="FunFam" id="1.10.286.20:FF:000001">
    <property type="entry name" value="Elongation factor Ts"/>
    <property type="match status" value="1"/>
</dbReference>
<dbReference type="FunFam" id="1.10.8.10:FF:000001">
    <property type="entry name" value="Elongation factor Ts"/>
    <property type="match status" value="1"/>
</dbReference>
<dbReference type="Gene3D" id="1.10.286.20">
    <property type="match status" value="1"/>
</dbReference>
<dbReference type="Gene3D" id="1.10.8.10">
    <property type="entry name" value="DNA helicase RuvA subunit, C-terminal domain"/>
    <property type="match status" value="1"/>
</dbReference>
<dbReference type="Gene3D" id="3.30.479.20">
    <property type="entry name" value="Elongation factor Ts, dimerisation domain"/>
    <property type="match status" value="1"/>
</dbReference>
<dbReference type="HAMAP" id="MF_00050">
    <property type="entry name" value="EF_Ts"/>
    <property type="match status" value="1"/>
</dbReference>
<dbReference type="InterPro" id="IPR036402">
    <property type="entry name" value="EF-Ts_dimer_sf"/>
</dbReference>
<dbReference type="InterPro" id="IPR001816">
    <property type="entry name" value="Transl_elong_EFTs/EF1B"/>
</dbReference>
<dbReference type="InterPro" id="IPR014039">
    <property type="entry name" value="Transl_elong_EFTs/EF1B_dimer"/>
</dbReference>
<dbReference type="InterPro" id="IPR018101">
    <property type="entry name" value="Transl_elong_Ts_CS"/>
</dbReference>
<dbReference type="InterPro" id="IPR009060">
    <property type="entry name" value="UBA-like_sf"/>
</dbReference>
<dbReference type="NCBIfam" id="TIGR00116">
    <property type="entry name" value="tsf"/>
    <property type="match status" value="1"/>
</dbReference>
<dbReference type="PANTHER" id="PTHR11741">
    <property type="entry name" value="ELONGATION FACTOR TS"/>
    <property type="match status" value="1"/>
</dbReference>
<dbReference type="PANTHER" id="PTHR11741:SF0">
    <property type="entry name" value="ELONGATION FACTOR TS, MITOCHONDRIAL"/>
    <property type="match status" value="1"/>
</dbReference>
<dbReference type="Pfam" id="PF00889">
    <property type="entry name" value="EF_TS"/>
    <property type="match status" value="1"/>
</dbReference>
<dbReference type="SUPFAM" id="SSF54713">
    <property type="entry name" value="Elongation factor Ts (EF-Ts), dimerisation domain"/>
    <property type="match status" value="1"/>
</dbReference>
<dbReference type="SUPFAM" id="SSF46934">
    <property type="entry name" value="UBA-like"/>
    <property type="match status" value="1"/>
</dbReference>
<dbReference type="PROSITE" id="PS01126">
    <property type="entry name" value="EF_TS_1"/>
    <property type="match status" value="1"/>
</dbReference>
<dbReference type="PROSITE" id="PS01127">
    <property type="entry name" value="EF_TS_2"/>
    <property type="match status" value="1"/>
</dbReference>
<protein>
    <recommendedName>
        <fullName evidence="1">Elongation factor Ts</fullName>
        <shortName evidence="1">EF-Ts</shortName>
    </recommendedName>
</protein>
<keyword id="KW-0963">Cytoplasm</keyword>
<keyword id="KW-0251">Elongation factor</keyword>
<keyword id="KW-0648">Protein biosynthesis</keyword>
<keyword id="KW-1185">Reference proteome</keyword>
<accession>B8E2Y1</accession>
<organism>
    <name type="scientific">Dictyoglomus turgidum (strain DSM 6724 / Z-1310)</name>
    <dbReference type="NCBI Taxonomy" id="515635"/>
    <lineage>
        <taxon>Bacteria</taxon>
        <taxon>Pseudomonadati</taxon>
        <taxon>Dictyoglomota</taxon>
        <taxon>Dictyoglomia</taxon>
        <taxon>Dictyoglomales</taxon>
        <taxon>Dictyoglomaceae</taxon>
        <taxon>Dictyoglomus</taxon>
    </lineage>
</organism>
<name>EFTS_DICTD</name>
<comment type="function">
    <text evidence="1">Associates with the EF-Tu.GDP complex and induces the exchange of GDP to GTP. It remains bound to the aminoacyl-tRNA.EF-Tu.GTP complex up to the GTP hydrolysis stage on the ribosome.</text>
</comment>
<comment type="subcellular location">
    <subcellularLocation>
        <location evidence="1">Cytoplasm</location>
    </subcellularLocation>
</comment>
<comment type="similarity">
    <text evidence="1">Belongs to the EF-Ts family.</text>
</comment>
<proteinExistence type="inferred from homology"/>
<reference key="1">
    <citation type="journal article" date="2016" name="Front. Microbiol.">
        <title>The complete genome sequence of hyperthermophile Dictyoglomus turgidum DSM 6724 reveals a specialized carbohydrate fermentor.</title>
        <authorList>
            <person name="Brumm P.J."/>
            <person name="Gowda K."/>
            <person name="Robb F.T."/>
            <person name="Mead D.A."/>
        </authorList>
    </citation>
    <scope>NUCLEOTIDE SEQUENCE [LARGE SCALE GENOMIC DNA]</scope>
    <source>
        <strain>DSM 6724 / Z-1310</strain>
    </source>
</reference>
<evidence type="ECO:0000255" key="1">
    <source>
        <dbReference type="HAMAP-Rule" id="MF_00050"/>
    </source>
</evidence>
<gene>
    <name evidence="1" type="primary">tsf</name>
    <name type="ordered locus">Dtur_1202</name>
</gene>